<organism>
    <name type="scientific">Emericella nidulans (strain FGSC A4 / ATCC 38163 / CBS 112.46 / NRRL 194 / M139)</name>
    <name type="common">Aspergillus nidulans</name>
    <dbReference type="NCBI Taxonomy" id="227321"/>
    <lineage>
        <taxon>Eukaryota</taxon>
        <taxon>Fungi</taxon>
        <taxon>Dikarya</taxon>
        <taxon>Ascomycota</taxon>
        <taxon>Pezizomycotina</taxon>
        <taxon>Eurotiomycetes</taxon>
        <taxon>Eurotiomycetidae</taxon>
        <taxon>Eurotiales</taxon>
        <taxon>Aspergillaceae</taxon>
        <taxon>Aspergillus</taxon>
        <taxon>Aspergillus subgen. Nidulantes</taxon>
    </lineage>
</organism>
<reference key="1">
    <citation type="journal article" date="2005" name="Nature">
        <title>Sequencing of Aspergillus nidulans and comparative analysis with A. fumigatus and A. oryzae.</title>
        <authorList>
            <person name="Galagan J.E."/>
            <person name="Calvo S.E."/>
            <person name="Cuomo C."/>
            <person name="Ma L.-J."/>
            <person name="Wortman J.R."/>
            <person name="Batzoglou S."/>
            <person name="Lee S.-I."/>
            <person name="Bastuerkmen M."/>
            <person name="Spevak C.C."/>
            <person name="Clutterbuck J."/>
            <person name="Kapitonov V."/>
            <person name="Jurka J."/>
            <person name="Scazzocchio C."/>
            <person name="Farman M.L."/>
            <person name="Butler J."/>
            <person name="Purcell S."/>
            <person name="Harris S."/>
            <person name="Braus G.H."/>
            <person name="Draht O."/>
            <person name="Busch S."/>
            <person name="D'Enfert C."/>
            <person name="Bouchier C."/>
            <person name="Goldman G.H."/>
            <person name="Bell-Pedersen D."/>
            <person name="Griffiths-Jones S."/>
            <person name="Doonan J.H."/>
            <person name="Yu J."/>
            <person name="Vienken K."/>
            <person name="Pain A."/>
            <person name="Freitag M."/>
            <person name="Selker E.U."/>
            <person name="Archer D.B."/>
            <person name="Penalva M.A."/>
            <person name="Oakley B.R."/>
            <person name="Momany M."/>
            <person name="Tanaka T."/>
            <person name="Kumagai T."/>
            <person name="Asai K."/>
            <person name="Machida M."/>
            <person name="Nierman W.C."/>
            <person name="Denning D.W."/>
            <person name="Caddick M.X."/>
            <person name="Hynes M."/>
            <person name="Paoletti M."/>
            <person name="Fischer R."/>
            <person name="Miller B.L."/>
            <person name="Dyer P.S."/>
            <person name="Sachs M.S."/>
            <person name="Osmani S.A."/>
            <person name="Birren B.W."/>
        </authorList>
    </citation>
    <scope>NUCLEOTIDE SEQUENCE [LARGE SCALE GENOMIC DNA]</scope>
    <source>
        <strain>FGSC A4 / ATCC 38163 / CBS 112.46 / NRRL 194 / M139</strain>
    </source>
</reference>
<reference key="2">
    <citation type="journal article" date="2009" name="Fungal Genet. Biol.">
        <title>The 2008 update of the Aspergillus nidulans genome annotation: a community effort.</title>
        <authorList>
            <person name="Wortman J.R."/>
            <person name="Gilsenan J.M."/>
            <person name="Joardar V."/>
            <person name="Deegan J."/>
            <person name="Clutterbuck J."/>
            <person name="Andersen M.R."/>
            <person name="Archer D."/>
            <person name="Bencina M."/>
            <person name="Braus G."/>
            <person name="Coutinho P."/>
            <person name="von Dohren H."/>
            <person name="Doonan J."/>
            <person name="Driessen A.J."/>
            <person name="Durek P."/>
            <person name="Espeso E."/>
            <person name="Fekete E."/>
            <person name="Flipphi M."/>
            <person name="Estrada C.G."/>
            <person name="Geysens S."/>
            <person name="Goldman G."/>
            <person name="de Groot P.W."/>
            <person name="Hansen K."/>
            <person name="Harris S.D."/>
            <person name="Heinekamp T."/>
            <person name="Helmstaedt K."/>
            <person name="Henrissat B."/>
            <person name="Hofmann G."/>
            <person name="Homan T."/>
            <person name="Horio T."/>
            <person name="Horiuchi H."/>
            <person name="James S."/>
            <person name="Jones M."/>
            <person name="Karaffa L."/>
            <person name="Karanyi Z."/>
            <person name="Kato M."/>
            <person name="Keller N."/>
            <person name="Kelly D.E."/>
            <person name="Kiel J.A."/>
            <person name="Kim J.M."/>
            <person name="van der Klei I.J."/>
            <person name="Klis F.M."/>
            <person name="Kovalchuk A."/>
            <person name="Krasevec N."/>
            <person name="Kubicek C.P."/>
            <person name="Liu B."/>
            <person name="Maccabe A."/>
            <person name="Meyer V."/>
            <person name="Mirabito P."/>
            <person name="Miskei M."/>
            <person name="Mos M."/>
            <person name="Mullins J."/>
            <person name="Nelson D.R."/>
            <person name="Nielsen J."/>
            <person name="Oakley B.R."/>
            <person name="Osmani S.A."/>
            <person name="Pakula T."/>
            <person name="Paszewski A."/>
            <person name="Paulsen I."/>
            <person name="Pilsyk S."/>
            <person name="Pocsi I."/>
            <person name="Punt P.J."/>
            <person name="Ram A.F."/>
            <person name="Ren Q."/>
            <person name="Robellet X."/>
            <person name="Robson G."/>
            <person name="Seiboth B."/>
            <person name="van Solingen P."/>
            <person name="Specht T."/>
            <person name="Sun J."/>
            <person name="Taheri-Talesh N."/>
            <person name="Takeshita N."/>
            <person name="Ussery D."/>
            <person name="vanKuyk P.A."/>
            <person name="Visser H."/>
            <person name="van de Vondervoort P.J."/>
            <person name="de Vries R.P."/>
            <person name="Walton J."/>
            <person name="Xiang X."/>
            <person name="Xiong Y."/>
            <person name="Zeng A.P."/>
            <person name="Brandt B.W."/>
            <person name="Cornell M.J."/>
            <person name="van den Hondel C.A."/>
            <person name="Visser J."/>
            <person name="Oliver S.G."/>
            <person name="Turner G."/>
        </authorList>
    </citation>
    <scope>GENOME REANNOTATION</scope>
    <source>
        <strain>FGSC A4 / ATCC 38163 / CBS 112.46 / NRRL 194 / M139</strain>
    </source>
</reference>
<evidence type="ECO:0000250" key="1"/>
<evidence type="ECO:0000256" key="2">
    <source>
        <dbReference type="SAM" id="MobiDB-lite"/>
    </source>
</evidence>
<evidence type="ECO:0000305" key="3"/>
<protein>
    <recommendedName>
        <fullName>Enhancer of polycomb-like protein 1</fullName>
    </recommendedName>
</protein>
<proteinExistence type="inferred from homology"/>
<dbReference type="EMBL" id="AACD01000109">
    <property type="protein sequence ID" value="EAA57907.1"/>
    <property type="molecule type" value="Genomic_DNA"/>
</dbReference>
<dbReference type="EMBL" id="BN001301">
    <property type="protein sequence ID" value="CBF71000.1"/>
    <property type="molecule type" value="Genomic_DNA"/>
</dbReference>
<dbReference type="RefSeq" id="XP_664171.1">
    <property type="nucleotide sequence ID" value="XM_659079.1"/>
</dbReference>
<dbReference type="SMR" id="Q5AYR3"/>
<dbReference type="STRING" id="227321.Q5AYR3"/>
<dbReference type="EnsemblFungi" id="CBF71000">
    <property type="protein sequence ID" value="CBF71000"/>
    <property type="gene ID" value="ANIA_06567"/>
</dbReference>
<dbReference type="KEGG" id="ani:ANIA_06567"/>
<dbReference type="VEuPathDB" id="FungiDB:AN6567"/>
<dbReference type="eggNOG" id="KOG2261">
    <property type="taxonomic scope" value="Eukaryota"/>
</dbReference>
<dbReference type="HOGENOM" id="CLU_010580_1_0_1"/>
<dbReference type="InParanoid" id="Q5AYR3"/>
<dbReference type="OMA" id="HIKWNEG"/>
<dbReference type="OrthoDB" id="435275at2759"/>
<dbReference type="Proteomes" id="UP000000560">
    <property type="component" value="Chromosome I"/>
</dbReference>
<dbReference type="GO" id="GO:0035267">
    <property type="term" value="C:NuA4 histone acetyltransferase complex"/>
    <property type="evidence" value="ECO:0007669"/>
    <property type="project" value="InterPro"/>
</dbReference>
<dbReference type="GO" id="GO:0005634">
    <property type="term" value="C:nucleus"/>
    <property type="evidence" value="ECO:0007669"/>
    <property type="project" value="UniProtKB-SubCell"/>
</dbReference>
<dbReference type="GO" id="GO:0032777">
    <property type="term" value="C:piccolo histone acetyltransferase complex"/>
    <property type="evidence" value="ECO:0000318"/>
    <property type="project" value="GO_Central"/>
</dbReference>
<dbReference type="GO" id="GO:0006281">
    <property type="term" value="P:DNA repair"/>
    <property type="evidence" value="ECO:0007669"/>
    <property type="project" value="UniProtKB-KW"/>
</dbReference>
<dbReference type="GO" id="GO:0006357">
    <property type="term" value="P:regulation of transcription by RNA polymerase II"/>
    <property type="evidence" value="ECO:0000318"/>
    <property type="project" value="GO_Central"/>
</dbReference>
<dbReference type="InterPro" id="IPR024943">
    <property type="entry name" value="Enhancer_polycomb"/>
</dbReference>
<dbReference type="InterPro" id="IPR019542">
    <property type="entry name" value="Enhancer_polycomb-like_N"/>
</dbReference>
<dbReference type="PANTHER" id="PTHR14898">
    <property type="entry name" value="ENHANCER OF POLYCOMB"/>
    <property type="match status" value="1"/>
</dbReference>
<dbReference type="Pfam" id="PF10513">
    <property type="entry name" value="EPL1"/>
    <property type="match status" value="1"/>
</dbReference>
<gene>
    <name type="primary">epl1</name>
    <name type="ORF">AN6567</name>
</gene>
<comment type="function">
    <text evidence="1">Component of the NuA4 histone acetyltransferase complex which is involved in transcriptional activation of selected genes principally by acetylation of nucleosomal histone H4 and H2A. The NuA4 complex is also involved in DNA repair. Involved in gene silencing by neighboring heterochromatin, blockage of the silencing spreading along the chromosome, and required for cell cycle progression through G2/M (By similarity).</text>
</comment>
<comment type="subunit">
    <text evidence="1">Component of the NuA4 histone acetyltransferase complex.</text>
</comment>
<comment type="subcellular location">
    <subcellularLocation>
        <location evidence="1">Nucleus</location>
    </subcellularLocation>
</comment>
<comment type="similarity">
    <text evidence="3">Belongs to the enhancer of polycomb family.</text>
</comment>
<sequence>MTRYAGLGRTRPKKLTPKAPIPIYREHQIDDLEEEIQNGLQQVETGVEKAEESEYHLQVAINAVASGRVVNEAHIPTPETVLSNLQYDELYPPVFSQPATYIRFSSTVEDCCGCPYNMTDEDDVFLKIMNEKRDPADRCTEDQFEEVMNFFEETVRLKQPYAAVGSAPVLSFAEMQESMDATVEDYVRRLAKDVYDHWKTRRLNNGNQSLLPSLKFETGAETDDTDPYVCFRRREVRQVRKTRGRDAQSADKLRRLRKELEDARQLVALVRQRELARKEMLATERILFLQRAEVKDMKRKLNIKDDDEDLINQKPKKKPIEAPPMQRPAAAQLRMPPKPGAQAAEDLQLLEDVQAEKENEIIRDIKANIAKHMKWNEGYVDFTRAPLSPSPERTVDISFRPAITTQLPTPPSSDSSENTPDLALDMSGTVSYRDKLDEHALIMSEDANKMPSFRRRIGRGGRLLIDRRNFASRCRVELDPWKADRFKYDQEDSDEDLDYEMDQYDISLMQNRAIMLAKARDQAHAQAQAAQVRRLQAEQAALNNLNSGQTSGQTMGSNPGPGAIAPTPET</sequence>
<feature type="chain" id="PRO_0000214161" description="Enhancer of polycomb-like protein 1">
    <location>
        <begin position="1"/>
        <end position="570"/>
    </location>
</feature>
<feature type="region of interest" description="Disordered" evidence="2">
    <location>
        <begin position="541"/>
        <end position="570"/>
    </location>
</feature>
<feature type="compositionally biased region" description="Polar residues" evidence="2">
    <location>
        <begin position="543"/>
        <end position="557"/>
    </location>
</feature>
<accession>Q5AYR3</accession>
<accession>C8V0V0</accession>
<keyword id="KW-0131">Cell cycle</keyword>
<keyword id="KW-0227">DNA damage</keyword>
<keyword id="KW-0234">DNA repair</keyword>
<keyword id="KW-0539">Nucleus</keyword>
<keyword id="KW-1185">Reference proteome</keyword>
<keyword id="KW-0804">Transcription</keyword>
<keyword id="KW-0805">Transcription regulation</keyword>
<name>EPL1_EMENI</name>